<sequence length="383" mass="42781">MDRKEMISMILAGGQGSRLGILTKKLAKPAVPFGGKYRIIDFVLSNCSNSGIYTVGVLTQYKPLELNSHIGIGTPWDLDRRDGGVYVLPPYQEESGGNWYKGTADAIYQNISFVDNYNPEYVIILSGDHIYKMNYANMLKFHKEKKADVTIAVIEVPIEETYRFGIVNTKSDMEIYEFQEKPMKAKSTKASMGVYIFKWTLLKRFLKADQSDKNSSNDFGKNIIPNMLNSGIKMYAYPFRGYWKDVGTIQSLWEANMDLLKEDNELNLGDLNWRIYSVNHVEPAQYIGPKANIKSSIAVNGCEIYGEVKNSIISSGSIIGKNSKIIDSVIMPYSKIGDNVIINKALVGSNVVVRKNSIIGDGREITVIGSNKDIKAESLLVSS</sequence>
<dbReference type="EC" id="2.7.7.27" evidence="1"/>
<dbReference type="EMBL" id="CP000673">
    <property type="protein sequence ID" value="EDK35485.1"/>
    <property type="molecule type" value="Genomic_DNA"/>
</dbReference>
<dbReference type="RefSeq" id="WP_012103816.1">
    <property type="nucleotide sequence ID" value="NC_009706.1"/>
</dbReference>
<dbReference type="SMR" id="A5N2Y9"/>
<dbReference type="STRING" id="431943.CKL_3494"/>
<dbReference type="KEGG" id="ckl:CKL_3494"/>
<dbReference type="eggNOG" id="COG0448">
    <property type="taxonomic scope" value="Bacteria"/>
</dbReference>
<dbReference type="HOGENOM" id="CLU_029499_14_0_9"/>
<dbReference type="UniPathway" id="UPA00164"/>
<dbReference type="Proteomes" id="UP000002411">
    <property type="component" value="Chromosome"/>
</dbReference>
<dbReference type="GO" id="GO:0005524">
    <property type="term" value="F:ATP binding"/>
    <property type="evidence" value="ECO:0007669"/>
    <property type="project" value="UniProtKB-KW"/>
</dbReference>
<dbReference type="GO" id="GO:0008878">
    <property type="term" value="F:glucose-1-phosphate adenylyltransferase activity"/>
    <property type="evidence" value="ECO:0007669"/>
    <property type="project" value="UniProtKB-UniRule"/>
</dbReference>
<dbReference type="GO" id="GO:0005978">
    <property type="term" value="P:glycogen biosynthetic process"/>
    <property type="evidence" value="ECO:0007669"/>
    <property type="project" value="UniProtKB-UniRule"/>
</dbReference>
<dbReference type="CDD" id="cd02508">
    <property type="entry name" value="ADP_Glucose_PP"/>
    <property type="match status" value="1"/>
</dbReference>
<dbReference type="Gene3D" id="2.160.10.10">
    <property type="entry name" value="Hexapeptide repeat proteins"/>
    <property type="match status" value="1"/>
</dbReference>
<dbReference type="Gene3D" id="3.90.550.10">
    <property type="entry name" value="Spore Coat Polysaccharide Biosynthesis Protein SpsA, Chain A"/>
    <property type="match status" value="1"/>
</dbReference>
<dbReference type="HAMAP" id="MF_00624">
    <property type="entry name" value="GlgC"/>
    <property type="match status" value="1"/>
</dbReference>
<dbReference type="InterPro" id="IPR011831">
    <property type="entry name" value="ADP-Glc_PPase"/>
</dbReference>
<dbReference type="InterPro" id="IPR005836">
    <property type="entry name" value="ADP_Glu_pyroP_CS"/>
</dbReference>
<dbReference type="InterPro" id="IPR023049">
    <property type="entry name" value="GlgC_bac"/>
</dbReference>
<dbReference type="InterPro" id="IPR056818">
    <property type="entry name" value="GlmU/GlgC-like_hexapep"/>
</dbReference>
<dbReference type="InterPro" id="IPR005835">
    <property type="entry name" value="NTP_transferase_dom"/>
</dbReference>
<dbReference type="InterPro" id="IPR029044">
    <property type="entry name" value="Nucleotide-diphossugar_trans"/>
</dbReference>
<dbReference type="InterPro" id="IPR011004">
    <property type="entry name" value="Trimer_LpxA-like_sf"/>
</dbReference>
<dbReference type="NCBIfam" id="TIGR02091">
    <property type="entry name" value="glgC"/>
    <property type="match status" value="1"/>
</dbReference>
<dbReference type="NCBIfam" id="NF003670">
    <property type="entry name" value="PRK05293.1"/>
    <property type="match status" value="1"/>
</dbReference>
<dbReference type="PANTHER" id="PTHR43523:SF2">
    <property type="entry name" value="GLUCOSE-1-PHOSPHATE ADENYLYLTRANSFERASE"/>
    <property type="match status" value="1"/>
</dbReference>
<dbReference type="PANTHER" id="PTHR43523">
    <property type="entry name" value="GLUCOSE-1-PHOSPHATE ADENYLYLTRANSFERASE-RELATED"/>
    <property type="match status" value="1"/>
</dbReference>
<dbReference type="Pfam" id="PF24894">
    <property type="entry name" value="Hexapep_GlmU"/>
    <property type="match status" value="1"/>
</dbReference>
<dbReference type="Pfam" id="PF00483">
    <property type="entry name" value="NTP_transferase"/>
    <property type="match status" value="1"/>
</dbReference>
<dbReference type="SUPFAM" id="SSF53448">
    <property type="entry name" value="Nucleotide-diphospho-sugar transferases"/>
    <property type="match status" value="1"/>
</dbReference>
<dbReference type="SUPFAM" id="SSF51161">
    <property type="entry name" value="Trimeric LpxA-like enzymes"/>
    <property type="match status" value="1"/>
</dbReference>
<dbReference type="PROSITE" id="PS00808">
    <property type="entry name" value="ADP_GLC_PYROPHOSPH_1"/>
    <property type="match status" value="1"/>
</dbReference>
<dbReference type="PROSITE" id="PS00809">
    <property type="entry name" value="ADP_GLC_PYROPHOSPH_2"/>
    <property type="match status" value="1"/>
</dbReference>
<organism>
    <name type="scientific">Clostridium kluyveri (strain ATCC 8527 / DSM 555 / NBRC 12016 / NCIMB 10680 / K1)</name>
    <dbReference type="NCBI Taxonomy" id="431943"/>
    <lineage>
        <taxon>Bacteria</taxon>
        <taxon>Bacillati</taxon>
        <taxon>Bacillota</taxon>
        <taxon>Clostridia</taxon>
        <taxon>Eubacteriales</taxon>
        <taxon>Clostridiaceae</taxon>
        <taxon>Clostridium</taxon>
    </lineage>
</organism>
<reference key="1">
    <citation type="journal article" date="2008" name="Proc. Natl. Acad. Sci. U.S.A.">
        <title>The genome of Clostridium kluyveri, a strict anaerobe with unique metabolic features.</title>
        <authorList>
            <person name="Seedorf H."/>
            <person name="Fricke W.F."/>
            <person name="Veith B."/>
            <person name="Brueggemann H."/>
            <person name="Liesegang H."/>
            <person name="Strittmatter A."/>
            <person name="Miethke M."/>
            <person name="Buckel W."/>
            <person name="Hinderberger J."/>
            <person name="Li F."/>
            <person name="Hagemeier C."/>
            <person name="Thauer R.K."/>
            <person name="Gottschalk G."/>
        </authorList>
    </citation>
    <scope>NUCLEOTIDE SEQUENCE [LARGE SCALE GENOMIC DNA]</scope>
    <source>
        <strain>ATCC 8527 / DSM 555 / NBRC 12016 / NCIMB 10680 / K1</strain>
    </source>
</reference>
<accession>A5N2Y9</accession>
<gene>
    <name evidence="1" type="primary">glgC</name>
    <name type="ordered locus">CKL_3494</name>
</gene>
<protein>
    <recommendedName>
        <fullName evidence="1">Glucose-1-phosphate adenylyltransferase</fullName>
        <ecNumber evidence="1">2.7.7.27</ecNumber>
    </recommendedName>
    <alternativeName>
        <fullName evidence="1">ADP-glucose pyrophosphorylase</fullName>
        <shortName evidence="1">ADPGlc PPase</shortName>
    </alternativeName>
    <alternativeName>
        <fullName evidence="1">ADP-glucose synthase</fullName>
    </alternativeName>
</protein>
<feature type="chain" id="PRO_1000082594" description="Glucose-1-phosphate adenylyltransferase">
    <location>
        <begin position="1"/>
        <end position="383"/>
    </location>
</feature>
<feature type="binding site" evidence="1">
    <location>
        <position position="100"/>
    </location>
    <ligand>
        <name>alpha-D-glucose 1-phosphate</name>
        <dbReference type="ChEBI" id="CHEBI:58601"/>
    </ligand>
</feature>
<feature type="binding site" evidence="1">
    <location>
        <position position="165"/>
    </location>
    <ligand>
        <name>alpha-D-glucose 1-phosphate</name>
        <dbReference type="ChEBI" id="CHEBI:58601"/>
    </ligand>
</feature>
<feature type="binding site" evidence="1">
    <location>
        <begin position="180"/>
        <end position="181"/>
    </location>
    <ligand>
        <name>alpha-D-glucose 1-phosphate</name>
        <dbReference type="ChEBI" id="CHEBI:58601"/>
    </ligand>
</feature>
<feature type="binding site" evidence="1">
    <location>
        <position position="191"/>
    </location>
    <ligand>
        <name>alpha-D-glucose 1-phosphate</name>
        <dbReference type="ChEBI" id="CHEBI:58601"/>
    </ligand>
</feature>
<comment type="function">
    <text evidence="1">Involved in the biosynthesis of ADP-glucose, a building block required for the elongation reactions to produce glycogen. Catalyzes the reaction between ATP and alpha-D-glucose 1-phosphate (G1P) to produce pyrophosphate and ADP-Glc.</text>
</comment>
<comment type="catalytic activity">
    <reaction evidence="1">
        <text>alpha-D-glucose 1-phosphate + ATP + H(+) = ADP-alpha-D-glucose + diphosphate</text>
        <dbReference type="Rhea" id="RHEA:12120"/>
        <dbReference type="ChEBI" id="CHEBI:15378"/>
        <dbReference type="ChEBI" id="CHEBI:30616"/>
        <dbReference type="ChEBI" id="CHEBI:33019"/>
        <dbReference type="ChEBI" id="CHEBI:57498"/>
        <dbReference type="ChEBI" id="CHEBI:58601"/>
        <dbReference type="EC" id="2.7.7.27"/>
    </reaction>
</comment>
<comment type="pathway">
    <text evidence="1">Glycan biosynthesis; glycogen biosynthesis.</text>
</comment>
<comment type="subunit">
    <text evidence="1">Homotetramer.</text>
</comment>
<comment type="similarity">
    <text evidence="1">Belongs to the bacterial/plant glucose-1-phosphate adenylyltransferase family.</text>
</comment>
<name>GLGC_CLOK5</name>
<evidence type="ECO:0000255" key="1">
    <source>
        <dbReference type="HAMAP-Rule" id="MF_00624"/>
    </source>
</evidence>
<keyword id="KW-0067">ATP-binding</keyword>
<keyword id="KW-0119">Carbohydrate metabolism</keyword>
<keyword id="KW-0320">Glycogen biosynthesis</keyword>
<keyword id="KW-0321">Glycogen metabolism</keyword>
<keyword id="KW-0547">Nucleotide-binding</keyword>
<keyword id="KW-0548">Nucleotidyltransferase</keyword>
<keyword id="KW-1185">Reference proteome</keyword>
<keyword id="KW-0808">Transferase</keyword>
<proteinExistence type="inferred from homology"/>